<reference key="1">
    <citation type="journal article" date="2004" name="Nature">
        <title>Genome sequence of Silicibacter pomeroyi reveals adaptations to the marine environment.</title>
        <authorList>
            <person name="Moran M.A."/>
            <person name="Buchan A."/>
            <person name="Gonzalez J.M."/>
            <person name="Heidelberg J.F."/>
            <person name="Whitman W.B."/>
            <person name="Kiene R.P."/>
            <person name="Henriksen J.R."/>
            <person name="King G.M."/>
            <person name="Belas R."/>
            <person name="Fuqua C."/>
            <person name="Brinkac L.M."/>
            <person name="Lewis M."/>
            <person name="Johri S."/>
            <person name="Weaver B."/>
            <person name="Pai G."/>
            <person name="Eisen J.A."/>
            <person name="Rahe E."/>
            <person name="Sheldon W.M."/>
            <person name="Ye W."/>
            <person name="Miller T.R."/>
            <person name="Carlton J."/>
            <person name="Rasko D.A."/>
            <person name="Paulsen I.T."/>
            <person name="Ren Q."/>
            <person name="Daugherty S.C."/>
            <person name="DeBoy R.T."/>
            <person name="Dodson R.J."/>
            <person name="Durkin A.S."/>
            <person name="Madupu R."/>
            <person name="Nelson W.C."/>
            <person name="Sullivan S.A."/>
            <person name="Rosovitz M.J."/>
            <person name="Haft D.H."/>
            <person name="Selengut J."/>
            <person name="Ward N."/>
        </authorList>
    </citation>
    <scope>NUCLEOTIDE SEQUENCE [LARGE SCALE GENOMIC DNA]</scope>
    <source>
        <strain>ATCC 700808 / DSM 15171 / DSS-3</strain>
    </source>
</reference>
<reference key="2">
    <citation type="journal article" date="2014" name="Stand. Genomic Sci.">
        <title>An updated genome annotation for the model marine bacterium Ruegeria pomeroyi DSS-3.</title>
        <authorList>
            <person name="Rivers A.R."/>
            <person name="Smith C.B."/>
            <person name="Moran M.A."/>
        </authorList>
    </citation>
    <scope>GENOME REANNOTATION</scope>
    <source>
        <strain>ATCC 700808 / DSM 15171 / DSS-3</strain>
    </source>
</reference>
<comment type="function">
    <text evidence="1">Part of the ABC transporter complex UgpBAEC involved in sn-glycerol-3-phosphate (G3P) import. Responsible for energy coupling to the transport system.</text>
</comment>
<comment type="catalytic activity">
    <reaction evidence="1">
        <text>sn-glycerol 3-phosphate(out) + ATP + H2O = sn-glycerol 3-phosphate(in) + ADP + phosphate + H(+)</text>
        <dbReference type="Rhea" id="RHEA:21668"/>
        <dbReference type="ChEBI" id="CHEBI:15377"/>
        <dbReference type="ChEBI" id="CHEBI:15378"/>
        <dbReference type="ChEBI" id="CHEBI:30616"/>
        <dbReference type="ChEBI" id="CHEBI:43474"/>
        <dbReference type="ChEBI" id="CHEBI:57597"/>
        <dbReference type="ChEBI" id="CHEBI:456216"/>
        <dbReference type="EC" id="7.6.2.10"/>
    </reaction>
</comment>
<comment type="subunit">
    <text evidence="1">The complex is composed of two ATP-binding proteins (UgpC), two transmembrane proteins (UgpA and UgpE) and a solute-binding protein (UgpB).</text>
</comment>
<comment type="subcellular location">
    <subcellularLocation>
        <location evidence="1">Cell inner membrane</location>
        <topology evidence="1">Peripheral membrane protein</topology>
    </subcellularLocation>
</comment>
<comment type="similarity">
    <text evidence="1">Belongs to the ABC transporter superfamily. sn-glycerol-3-phosphate importer (TC 3.A.1.1.3) family.</text>
</comment>
<protein>
    <recommendedName>
        <fullName evidence="1">sn-glycerol-3-phosphate import ATP-binding protein UgpC</fullName>
        <ecNumber evidence="1">7.6.2.10</ecNumber>
    </recommendedName>
</protein>
<feature type="chain" id="PRO_0000289784" description="sn-glycerol-3-phosphate import ATP-binding protein UgpC">
    <location>
        <begin position="1"/>
        <end position="351"/>
    </location>
</feature>
<feature type="domain" description="ABC transporter" evidence="1">
    <location>
        <begin position="4"/>
        <end position="234"/>
    </location>
</feature>
<feature type="binding site" evidence="1">
    <location>
        <begin position="36"/>
        <end position="43"/>
    </location>
    <ligand>
        <name>ATP</name>
        <dbReference type="ChEBI" id="CHEBI:30616"/>
    </ligand>
</feature>
<keyword id="KW-0067">ATP-binding</keyword>
<keyword id="KW-0997">Cell inner membrane</keyword>
<keyword id="KW-1003">Cell membrane</keyword>
<keyword id="KW-0472">Membrane</keyword>
<keyword id="KW-0547">Nucleotide-binding</keyword>
<keyword id="KW-1185">Reference proteome</keyword>
<keyword id="KW-0762">Sugar transport</keyword>
<keyword id="KW-1278">Translocase</keyword>
<keyword id="KW-0813">Transport</keyword>
<sequence>MASITLDNLVKAYGDTEVLHHVAGQIEDGEFIVIVGPSGCGKSTLLRMVAGLETVTAGQISIGDRVVNQLEPADRDIAMVFQNYALYPHMSVRENMAYGLKIRKISKDEIARRVEEAADILELRPYLDRKPRQLSGGQRQRVAMGRAIVRNPQVFLFDEPLSNLDAKLRVQMRLEIRKLQQRLGVTSIYVTHDQVEAMTLGDRLMVLNGGYVEQFGTPIELYDRPATTFVAGFIGSPAMNFLPATAAEGSVTLANGARIAGSGTAHGTVTLGLRPEHLLPDEGGPVRVRVELVEQLGANSLLHGQLEGTDTEMVVSMPGHMSAAADAVMAFTPTADSLHLFDPETGKRIAE</sequence>
<gene>
    <name evidence="1" type="primary">ugpC</name>
    <name type="ordered locus">SPO0237</name>
</gene>
<accession>Q5LX21</accession>
<name>UGPC_RUEPO</name>
<dbReference type="EC" id="7.6.2.10" evidence="1"/>
<dbReference type="EMBL" id="CP000031">
    <property type="protein sequence ID" value="AAV93562.1"/>
    <property type="molecule type" value="Genomic_DNA"/>
</dbReference>
<dbReference type="RefSeq" id="WP_011046004.1">
    <property type="nucleotide sequence ID" value="NC_003911.12"/>
</dbReference>
<dbReference type="SMR" id="Q5LX21"/>
<dbReference type="STRING" id="246200.SPO0237"/>
<dbReference type="PaxDb" id="246200-SPO0237"/>
<dbReference type="KEGG" id="sil:SPO0237"/>
<dbReference type="eggNOG" id="COG3842">
    <property type="taxonomic scope" value="Bacteria"/>
</dbReference>
<dbReference type="HOGENOM" id="CLU_000604_1_1_5"/>
<dbReference type="OrthoDB" id="8188565at2"/>
<dbReference type="Proteomes" id="UP000001023">
    <property type="component" value="Chromosome"/>
</dbReference>
<dbReference type="GO" id="GO:0055052">
    <property type="term" value="C:ATP-binding cassette (ABC) transporter complex, substrate-binding subunit-containing"/>
    <property type="evidence" value="ECO:0007669"/>
    <property type="project" value="TreeGrafter"/>
</dbReference>
<dbReference type="GO" id="GO:0015430">
    <property type="term" value="F:ABC-type glycerol-3-phosphate transporter activity"/>
    <property type="evidence" value="ECO:0007669"/>
    <property type="project" value="UniProtKB-EC"/>
</dbReference>
<dbReference type="GO" id="GO:0005524">
    <property type="term" value="F:ATP binding"/>
    <property type="evidence" value="ECO:0007669"/>
    <property type="project" value="UniProtKB-KW"/>
</dbReference>
<dbReference type="GO" id="GO:0016887">
    <property type="term" value="F:ATP hydrolysis activity"/>
    <property type="evidence" value="ECO:0007669"/>
    <property type="project" value="InterPro"/>
</dbReference>
<dbReference type="GO" id="GO:0008643">
    <property type="term" value="P:carbohydrate transport"/>
    <property type="evidence" value="ECO:0007669"/>
    <property type="project" value="InterPro"/>
</dbReference>
<dbReference type="GO" id="GO:0001407">
    <property type="term" value="P:glycerophosphodiester transmembrane transport"/>
    <property type="evidence" value="ECO:0007669"/>
    <property type="project" value="TreeGrafter"/>
</dbReference>
<dbReference type="CDD" id="cd03301">
    <property type="entry name" value="ABC_MalK_N"/>
    <property type="match status" value="1"/>
</dbReference>
<dbReference type="FunFam" id="3.40.50.300:FF:000042">
    <property type="entry name" value="Maltose/maltodextrin ABC transporter, ATP-binding protein"/>
    <property type="match status" value="1"/>
</dbReference>
<dbReference type="Gene3D" id="2.40.50.100">
    <property type="match status" value="1"/>
</dbReference>
<dbReference type="Gene3D" id="2.40.50.140">
    <property type="entry name" value="Nucleic acid-binding proteins"/>
    <property type="match status" value="1"/>
</dbReference>
<dbReference type="Gene3D" id="3.40.50.300">
    <property type="entry name" value="P-loop containing nucleotide triphosphate hydrolases"/>
    <property type="match status" value="1"/>
</dbReference>
<dbReference type="InterPro" id="IPR003593">
    <property type="entry name" value="AAA+_ATPase"/>
</dbReference>
<dbReference type="InterPro" id="IPR003439">
    <property type="entry name" value="ABC_transporter-like_ATP-bd"/>
</dbReference>
<dbReference type="InterPro" id="IPR017871">
    <property type="entry name" value="ABC_transporter-like_CS"/>
</dbReference>
<dbReference type="InterPro" id="IPR015855">
    <property type="entry name" value="ABC_transpr_MalK-like"/>
</dbReference>
<dbReference type="InterPro" id="IPR047641">
    <property type="entry name" value="ABC_transpr_MalK/UgpC-like"/>
</dbReference>
<dbReference type="InterPro" id="IPR008995">
    <property type="entry name" value="Mo/tungstate-bd_C_term_dom"/>
</dbReference>
<dbReference type="InterPro" id="IPR012340">
    <property type="entry name" value="NA-bd_OB-fold"/>
</dbReference>
<dbReference type="InterPro" id="IPR040582">
    <property type="entry name" value="OB_MalK-like"/>
</dbReference>
<dbReference type="InterPro" id="IPR027417">
    <property type="entry name" value="P-loop_NTPase"/>
</dbReference>
<dbReference type="NCBIfam" id="NF008653">
    <property type="entry name" value="PRK11650.1"/>
    <property type="match status" value="1"/>
</dbReference>
<dbReference type="PANTHER" id="PTHR43875">
    <property type="entry name" value="MALTODEXTRIN IMPORT ATP-BINDING PROTEIN MSMX"/>
    <property type="match status" value="1"/>
</dbReference>
<dbReference type="PANTHER" id="PTHR43875:SF12">
    <property type="entry name" value="SN-GLYCEROL-3-PHOSPHATE IMPORT ATP-BINDING PROTEIN UGPC"/>
    <property type="match status" value="1"/>
</dbReference>
<dbReference type="Pfam" id="PF00005">
    <property type="entry name" value="ABC_tran"/>
    <property type="match status" value="1"/>
</dbReference>
<dbReference type="Pfam" id="PF17912">
    <property type="entry name" value="OB_MalK"/>
    <property type="match status" value="1"/>
</dbReference>
<dbReference type="SMART" id="SM00382">
    <property type="entry name" value="AAA"/>
    <property type="match status" value="1"/>
</dbReference>
<dbReference type="SUPFAM" id="SSF50331">
    <property type="entry name" value="MOP-like"/>
    <property type="match status" value="1"/>
</dbReference>
<dbReference type="SUPFAM" id="SSF52540">
    <property type="entry name" value="P-loop containing nucleoside triphosphate hydrolases"/>
    <property type="match status" value="1"/>
</dbReference>
<dbReference type="PROSITE" id="PS00211">
    <property type="entry name" value="ABC_TRANSPORTER_1"/>
    <property type="match status" value="1"/>
</dbReference>
<dbReference type="PROSITE" id="PS50893">
    <property type="entry name" value="ABC_TRANSPORTER_2"/>
    <property type="match status" value="1"/>
</dbReference>
<dbReference type="PROSITE" id="PS51315">
    <property type="entry name" value="UGPC"/>
    <property type="match status" value="1"/>
</dbReference>
<organism>
    <name type="scientific">Ruegeria pomeroyi (strain ATCC 700808 / DSM 15171 / DSS-3)</name>
    <name type="common">Silicibacter pomeroyi</name>
    <dbReference type="NCBI Taxonomy" id="246200"/>
    <lineage>
        <taxon>Bacteria</taxon>
        <taxon>Pseudomonadati</taxon>
        <taxon>Pseudomonadota</taxon>
        <taxon>Alphaproteobacteria</taxon>
        <taxon>Rhodobacterales</taxon>
        <taxon>Roseobacteraceae</taxon>
        <taxon>Ruegeria</taxon>
    </lineage>
</organism>
<proteinExistence type="inferred from homology"/>
<evidence type="ECO:0000255" key="1">
    <source>
        <dbReference type="HAMAP-Rule" id="MF_01727"/>
    </source>
</evidence>